<reference key="1">
    <citation type="journal article" date="2008" name="PLoS ONE">
        <title>Genome sequence of Brucella abortus vaccine strain S19 compared to virulent strains yields candidate virulence genes.</title>
        <authorList>
            <person name="Crasta O.R."/>
            <person name="Folkerts O."/>
            <person name="Fei Z."/>
            <person name="Mane S.P."/>
            <person name="Evans C."/>
            <person name="Martino-Catt S."/>
            <person name="Bricker B."/>
            <person name="Yu G."/>
            <person name="Du L."/>
            <person name="Sobral B.W."/>
        </authorList>
    </citation>
    <scope>NUCLEOTIDE SEQUENCE [LARGE SCALE GENOMIC DNA]</scope>
    <source>
        <strain>S19</strain>
    </source>
</reference>
<keyword id="KW-0119">Carbohydrate metabolism</keyword>
<keyword id="KW-0963">Cytoplasm</keyword>
<keyword id="KW-0413">Isomerase</keyword>
<keyword id="KW-0460">Magnesium</keyword>
<keyword id="KW-0479">Metal-binding</keyword>
<keyword id="KW-0859">Xylose metabolism</keyword>
<feature type="chain" id="PRO_1000200279" description="Xylose isomerase">
    <location>
        <begin position="1"/>
        <end position="435"/>
    </location>
</feature>
<feature type="active site" evidence="1">
    <location>
        <position position="100"/>
    </location>
</feature>
<feature type="active site" evidence="1">
    <location>
        <position position="103"/>
    </location>
</feature>
<feature type="binding site" evidence="1">
    <location>
        <position position="231"/>
    </location>
    <ligand>
        <name>Mg(2+)</name>
        <dbReference type="ChEBI" id="CHEBI:18420"/>
        <label>1</label>
    </ligand>
</feature>
<feature type="binding site" evidence="1">
    <location>
        <position position="267"/>
    </location>
    <ligand>
        <name>Mg(2+)</name>
        <dbReference type="ChEBI" id="CHEBI:18420"/>
        <label>1</label>
    </ligand>
</feature>
<feature type="binding site" evidence="1">
    <location>
        <position position="267"/>
    </location>
    <ligand>
        <name>Mg(2+)</name>
        <dbReference type="ChEBI" id="CHEBI:18420"/>
        <label>2</label>
    </ligand>
</feature>
<feature type="binding site" evidence="1">
    <location>
        <position position="270"/>
    </location>
    <ligand>
        <name>Mg(2+)</name>
        <dbReference type="ChEBI" id="CHEBI:18420"/>
        <label>2</label>
    </ligand>
</feature>
<feature type="binding site" evidence="1">
    <location>
        <position position="295"/>
    </location>
    <ligand>
        <name>Mg(2+)</name>
        <dbReference type="ChEBI" id="CHEBI:18420"/>
        <label>1</label>
    </ligand>
</feature>
<feature type="binding site" evidence="1">
    <location>
        <position position="306"/>
    </location>
    <ligand>
        <name>Mg(2+)</name>
        <dbReference type="ChEBI" id="CHEBI:18420"/>
        <label>2</label>
    </ligand>
</feature>
<feature type="binding site" evidence="1">
    <location>
        <position position="308"/>
    </location>
    <ligand>
        <name>Mg(2+)</name>
        <dbReference type="ChEBI" id="CHEBI:18420"/>
        <label>2</label>
    </ligand>
</feature>
<feature type="binding site" evidence="1">
    <location>
        <position position="338"/>
    </location>
    <ligand>
        <name>Mg(2+)</name>
        <dbReference type="ChEBI" id="CHEBI:18420"/>
        <label>1</label>
    </ligand>
</feature>
<sequence length="435" mass="49004">MSTGFFGDIQKVRYEGPESDNPLAFRHYNADEIVLGKRMEDHLRFAVAYWHSFAWEGGDPFGGRTFDRPWFSNEIDAAKLKADVAFEFFSLLGAPYYCFHDADVRPEGRNFAENTRYLNEIVDIFEKKQAETGMKLLWGTANLFSNRRYMAGAATNPDPDVFAFAAATVKTCIDATKRLGGENYVLWGGREGYETLLNTDLSRELDHMGRFLSLVVEYKHKIGFKGTILIEPKPQEPTKHQYDYDVATVYGFLKRYGLENEVKVNIEQGHAILAGHSFEHELALARTLGIFGSIDMNRNDYQSGWDTDQFPNNVPEMALAYYQVLLAGGFTTGGTNFDAKLRRQSLDPQDLLIGHIGGMDCCARGLKAAARMLEDGALSKPLDERYAGWNGEFGKRLLSGLSLDQIAGEVEAKDINPQPKSGRQEYLENIVNRYV</sequence>
<name>XYLA_BRUA1</name>
<gene>
    <name evidence="1" type="primary">xylA</name>
    <name type="ordered locus">BAbS19_I05320</name>
</gene>
<evidence type="ECO:0000255" key="1">
    <source>
        <dbReference type="HAMAP-Rule" id="MF_00455"/>
    </source>
</evidence>
<dbReference type="EC" id="5.3.1.5" evidence="1"/>
<dbReference type="EMBL" id="CP000887">
    <property type="protein sequence ID" value="ACD72067.1"/>
    <property type="molecule type" value="Genomic_DNA"/>
</dbReference>
<dbReference type="RefSeq" id="WP_002966715.1">
    <property type="nucleotide sequence ID" value="NC_010742.1"/>
</dbReference>
<dbReference type="SMR" id="B2SA37"/>
<dbReference type="GeneID" id="97534105"/>
<dbReference type="KEGG" id="bmc:BAbS19_I05320"/>
<dbReference type="HOGENOM" id="CLU_037261_1_0_5"/>
<dbReference type="Proteomes" id="UP000002565">
    <property type="component" value="Chromosome 1"/>
</dbReference>
<dbReference type="GO" id="GO:0005737">
    <property type="term" value="C:cytoplasm"/>
    <property type="evidence" value="ECO:0007669"/>
    <property type="project" value="UniProtKB-SubCell"/>
</dbReference>
<dbReference type="GO" id="GO:0000287">
    <property type="term" value="F:magnesium ion binding"/>
    <property type="evidence" value="ECO:0007669"/>
    <property type="project" value="UniProtKB-UniRule"/>
</dbReference>
<dbReference type="GO" id="GO:0009045">
    <property type="term" value="F:xylose isomerase activity"/>
    <property type="evidence" value="ECO:0007669"/>
    <property type="project" value="UniProtKB-UniRule"/>
</dbReference>
<dbReference type="GO" id="GO:0042732">
    <property type="term" value="P:D-xylose metabolic process"/>
    <property type="evidence" value="ECO:0007669"/>
    <property type="project" value="UniProtKB-UniRule"/>
</dbReference>
<dbReference type="FunFam" id="3.20.20.150:FF:000002">
    <property type="entry name" value="Xylose isomerase"/>
    <property type="match status" value="1"/>
</dbReference>
<dbReference type="Gene3D" id="3.20.20.150">
    <property type="entry name" value="Divalent-metal-dependent TIM barrel enzymes"/>
    <property type="match status" value="1"/>
</dbReference>
<dbReference type="HAMAP" id="MF_00455">
    <property type="entry name" value="Xylose_isom_A"/>
    <property type="match status" value="1"/>
</dbReference>
<dbReference type="InterPro" id="IPR036237">
    <property type="entry name" value="Xyl_isomerase-like_sf"/>
</dbReference>
<dbReference type="InterPro" id="IPR013452">
    <property type="entry name" value="Xylose_isom_bac"/>
</dbReference>
<dbReference type="InterPro" id="IPR001998">
    <property type="entry name" value="Xylose_isomerase"/>
</dbReference>
<dbReference type="NCBIfam" id="NF003998">
    <property type="entry name" value="PRK05474.1"/>
    <property type="match status" value="1"/>
</dbReference>
<dbReference type="NCBIfam" id="TIGR02630">
    <property type="entry name" value="xylose_isom_A"/>
    <property type="match status" value="1"/>
</dbReference>
<dbReference type="PANTHER" id="PTHR48408">
    <property type="match status" value="1"/>
</dbReference>
<dbReference type="PANTHER" id="PTHR48408:SF1">
    <property type="entry name" value="XYLOSE ISOMERASE"/>
    <property type="match status" value="1"/>
</dbReference>
<dbReference type="PRINTS" id="PR00688">
    <property type="entry name" value="XYLOSISMRASE"/>
</dbReference>
<dbReference type="SUPFAM" id="SSF51658">
    <property type="entry name" value="Xylose isomerase-like"/>
    <property type="match status" value="1"/>
</dbReference>
<dbReference type="PROSITE" id="PS51415">
    <property type="entry name" value="XYLOSE_ISOMERASE"/>
    <property type="match status" value="1"/>
</dbReference>
<organism>
    <name type="scientific">Brucella abortus (strain S19)</name>
    <dbReference type="NCBI Taxonomy" id="430066"/>
    <lineage>
        <taxon>Bacteria</taxon>
        <taxon>Pseudomonadati</taxon>
        <taxon>Pseudomonadota</taxon>
        <taxon>Alphaproteobacteria</taxon>
        <taxon>Hyphomicrobiales</taxon>
        <taxon>Brucellaceae</taxon>
        <taxon>Brucella/Ochrobactrum group</taxon>
        <taxon>Brucella</taxon>
    </lineage>
</organism>
<accession>B2SA37</accession>
<comment type="catalytic activity">
    <reaction evidence="1">
        <text>alpha-D-xylose = alpha-D-xylulofuranose</text>
        <dbReference type="Rhea" id="RHEA:22816"/>
        <dbReference type="ChEBI" id="CHEBI:28518"/>
        <dbReference type="ChEBI" id="CHEBI:188998"/>
        <dbReference type="EC" id="5.3.1.5"/>
    </reaction>
</comment>
<comment type="cofactor">
    <cofactor evidence="1">
        <name>Mg(2+)</name>
        <dbReference type="ChEBI" id="CHEBI:18420"/>
    </cofactor>
    <text evidence="1">Binds 2 magnesium ions per subunit.</text>
</comment>
<comment type="subunit">
    <text evidence="1">Homotetramer.</text>
</comment>
<comment type="subcellular location">
    <subcellularLocation>
        <location evidence="1">Cytoplasm</location>
    </subcellularLocation>
</comment>
<comment type="similarity">
    <text evidence="1">Belongs to the xylose isomerase family.</text>
</comment>
<protein>
    <recommendedName>
        <fullName evidence="1">Xylose isomerase</fullName>
        <ecNumber evidence="1">5.3.1.5</ecNumber>
    </recommendedName>
</protein>
<proteinExistence type="inferred from homology"/>